<dbReference type="EMBL" id="AE014074">
    <property type="protein sequence ID" value="AAM78867.1"/>
    <property type="molecule type" value="Genomic_DNA"/>
</dbReference>
<dbReference type="RefSeq" id="WP_011054209.1">
    <property type="nucleotide sequence ID" value="NC_004070.1"/>
</dbReference>
<dbReference type="SMR" id="P0DA10"/>
<dbReference type="KEGG" id="spg:SpyM3_0260"/>
<dbReference type="HOGENOM" id="CLU_058671_1_2_9"/>
<dbReference type="Proteomes" id="UP000000564">
    <property type="component" value="Chromosome"/>
</dbReference>
<dbReference type="GO" id="GO:0005886">
    <property type="term" value="C:plasma membrane"/>
    <property type="evidence" value="ECO:0007669"/>
    <property type="project" value="UniProtKB-SubCell"/>
</dbReference>
<dbReference type="CDD" id="cd10432">
    <property type="entry name" value="BI-1-like_bacterial"/>
    <property type="match status" value="1"/>
</dbReference>
<dbReference type="InterPro" id="IPR006214">
    <property type="entry name" value="Bax_inhibitor_1-related"/>
</dbReference>
<dbReference type="PANTHER" id="PTHR23291">
    <property type="entry name" value="BAX INHIBITOR-RELATED"/>
    <property type="match status" value="1"/>
</dbReference>
<dbReference type="PANTHER" id="PTHR23291:SF50">
    <property type="entry name" value="PROTEIN LIFEGUARD 4"/>
    <property type="match status" value="1"/>
</dbReference>
<dbReference type="Pfam" id="PF01027">
    <property type="entry name" value="Bax1-I"/>
    <property type="match status" value="1"/>
</dbReference>
<protein>
    <recommendedName>
        <fullName>Uncharacterized membrane protein SpyM3_0260</fullName>
    </recommendedName>
</protein>
<reference key="1">
    <citation type="journal article" date="2002" name="Proc. Natl. Acad. Sci. U.S.A.">
        <title>Genome sequence of a serotype M3 strain of group A Streptococcus: phage-encoded toxins, the high-virulence phenotype, and clone emergence.</title>
        <authorList>
            <person name="Beres S.B."/>
            <person name="Sylva G.L."/>
            <person name="Barbian K.D."/>
            <person name="Lei B."/>
            <person name="Hoff J.S."/>
            <person name="Mammarella N.D."/>
            <person name="Liu M.-Y."/>
            <person name="Smoot J.C."/>
            <person name="Porcella S.F."/>
            <person name="Parkins L.D."/>
            <person name="Campbell D.S."/>
            <person name="Smith T.M."/>
            <person name="McCormick J.K."/>
            <person name="Leung D.Y.M."/>
            <person name="Schlievert P.M."/>
            <person name="Musser J.M."/>
        </authorList>
    </citation>
    <scope>NUCLEOTIDE SEQUENCE [LARGE SCALE GENOMIC DNA]</scope>
    <source>
        <strain>ATCC BAA-595 / MGAS315</strain>
    </source>
</reference>
<proteinExistence type="inferred from homology"/>
<keyword id="KW-1003">Cell membrane</keyword>
<keyword id="KW-0472">Membrane</keyword>
<keyword id="KW-0812">Transmembrane</keyword>
<keyword id="KW-1133">Transmembrane helix</keyword>
<name>Y260_STRP3</name>
<organism>
    <name type="scientific">Streptococcus pyogenes serotype M3 (strain ATCC BAA-595 / MGAS315)</name>
    <dbReference type="NCBI Taxonomy" id="198466"/>
    <lineage>
        <taxon>Bacteria</taxon>
        <taxon>Bacillati</taxon>
        <taxon>Bacillota</taxon>
        <taxon>Bacilli</taxon>
        <taxon>Lactobacillales</taxon>
        <taxon>Streptococcaceae</taxon>
        <taxon>Streptococcus</taxon>
    </lineage>
</organism>
<evidence type="ECO:0000255" key="1"/>
<evidence type="ECO:0000305" key="2"/>
<accession>P0DA10</accession>
<accession>Q79WC6</accession>
<accession>Q8K8I9</accession>
<gene>
    <name type="ordered locus">SpyM3_0260</name>
</gene>
<sequence length="229" mass="24944">MNDHVIYTQSDVGLNQFFAKIYSLVGMGVGLSAFVSYLMLYPFRENLISILVNQPMIYYGAAIIELILVFVASGAARKNTPAALPIFLIYAALNGFTLSFIIVAYAQTTVFQAFLSSAAVFFAMSIIGVKTKRDMSGLRKAMFAALIGVVVASLINLFIGSGMMSYVISVISVLIFSGLIASDNQMIKRVYQATNGQVGDGWAVAMALSLYLDFINLFISLLRIFGRND</sequence>
<feature type="chain" id="PRO_0000179114" description="Uncharacterized membrane protein SpyM3_0260">
    <location>
        <begin position="1"/>
        <end position="229"/>
    </location>
</feature>
<feature type="transmembrane region" description="Helical" evidence="1">
    <location>
        <begin position="21"/>
        <end position="41"/>
    </location>
</feature>
<feature type="transmembrane region" description="Helical" evidence="1">
    <location>
        <begin position="56"/>
        <end position="76"/>
    </location>
</feature>
<feature type="transmembrane region" description="Helical" evidence="1">
    <location>
        <begin position="83"/>
        <end position="103"/>
    </location>
</feature>
<feature type="transmembrane region" description="Helical" evidence="1">
    <location>
        <begin position="109"/>
        <end position="129"/>
    </location>
</feature>
<feature type="transmembrane region" description="Helical" evidence="1">
    <location>
        <begin position="141"/>
        <end position="161"/>
    </location>
</feature>
<feature type="transmembrane region" description="Helical" evidence="1">
    <location>
        <begin position="162"/>
        <end position="182"/>
    </location>
</feature>
<feature type="transmembrane region" description="Helical" evidence="1">
    <location>
        <begin position="202"/>
        <end position="222"/>
    </location>
</feature>
<comment type="subcellular location">
    <subcellularLocation>
        <location evidence="2">Cell membrane</location>
        <topology evidence="2">Multi-pass membrane protein</topology>
    </subcellularLocation>
</comment>
<comment type="similarity">
    <text evidence="2">Belongs to the BI1 family.</text>
</comment>